<name>YGD9_YEAST</name>
<feature type="chain" id="PRO_0000215577" description="Putative uncharacterized oxidoreductase YGL039W">
    <location>
        <begin position="1"/>
        <end position="348"/>
    </location>
</feature>
<feature type="binding site" evidence="1">
    <location>
        <position position="41"/>
    </location>
    <ligand>
        <name>NADP(+)</name>
        <dbReference type="ChEBI" id="CHEBI:58349"/>
    </ligand>
</feature>
<feature type="binding site" evidence="1">
    <location>
        <position position="170"/>
    </location>
    <ligand>
        <name>NADP(+)</name>
        <dbReference type="ChEBI" id="CHEBI:58349"/>
    </ligand>
</feature>
<feature type="modified residue" description="Phosphoserine" evidence="2">
    <location>
        <position position="339"/>
    </location>
</feature>
<evidence type="ECO:0000250" key="1">
    <source>
        <dbReference type="UniProtKB" id="A0A059TC02"/>
    </source>
</evidence>
<evidence type="ECO:0000250" key="2">
    <source>
        <dbReference type="UniProtKB" id="Q12068"/>
    </source>
</evidence>
<evidence type="ECO:0000269" key="3">
    <source>
    </source>
</evidence>
<evidence type="ECO:0000305" key="4"/>
<gene>
    <name type="ordered locus">YGL039W</name>
</gene>
<organism>
    <name type="scientific">Saccharomyces cerevisiae (strain ATCC 204508 / S288c)</name>
    <name type="common">Baker's yeast</name>
    <dbReference type="NCBI Taxonomy" id="559292"/>
    <lineage>
        <taxon>Eukaryota</taxon>
        <taxon>Fungi</taxon>
        <taxon>Dikarya</taxon>
        <taxon>Ascomycota</taxon>
        <taxon>Saccharomycotina</taxon>
        <taxon>Saccharomycetes</taxon>
        <taxon>Saccharomycetales</taxon>
        <taxon>Saccharomycetaceae</taxon>
        <taxon>Saccharomyces</taxon>
    </lineage>
</organism>
<comment type="miscellaneous">
    <text evidence="3">Present with 2340 molecules/cell in log phase SD medium.</text>
</comment>
<comment type="similarity">
    <text evidence="4">Belongs to the NAD(P)-dependent epimerase/dehydratase family. Dihydroflavonol-4-reductase subfamily.</text>
</comment>
<accession>P53183</accession>
<accession>D6VUA0</accession>
<dbReference type="EC" id="1.1.1.-"/>
<dbReference type="EMBL" id="Z72561">
    <property type="protein sequence ID" value="CAA96741.1"/>
    <property type="molecule type" value="Genomic_DNA"/>
</dbReference>
<dbReference type="EMBL" id="AY692765">
    <property type="protein sequence ID" value="AAT92784.1"/>
    <property type="molecule type" value="Genomic_DNA"/>
</dbReference>
<dbReference type="EMBL" id="BK006941">
    <property type="protein sequence ID" value="DAA08061.1"/>
    <property type="molecule type" value="Genomic_DNA"/>
</dbReference>
<dbReference type="PIR" id="S64041">
    <property type="entry name" value="S64041"/>
</dbReference>
<dbReference type="RefSeq" id="NP_011476.1">
    <property type="nucleotide sequence ID" value="NM_001180904.1"/>
</dbReference>
<dbReference type="SMR" id="P53183"/>
<dbReference type="BioGRID" id="33208">
    <property type="interactions" value="43"/>
</dbReference>
<dbReference type="DIP" id="DIP-5378N"/>
<dbReference type="FunCoup" id="P53183">
    <property type="interactions" value="132"/>
</dbReference>
<dbReference type="IntAct" id="P53183">
    <property type="interactions" value="11"/>
</dbReference>
<dbReference type="MINT" id="P53183"/>
<dbReference type="STRING" id="4932.YGL039W"/>
<dbReference type="iPTMnet" id="P53183"/>
<dbReference type="PaxDb" id="4932-YGL039W"/>
<dbReference type="PeptideAtlas" id="P53183"/>
<dbReference type="TopDownProteomics" id="P53183"/>
<dbReference type="EnsemblFungi" id="YGL039W_mRNA">
    <property type="protein sequence ID" value="YGL039W"/>
    <property type="gene ID" value="YGL039W"/>
</dbReference>
<dbReference type="GeneID" id="852844"/>
<dbReference type="KEGG" id="sce:YGL039W"/>
<dbReference type="AGR" id="SGD:S000003007"/>
<dbReference type="SGD" id="S000003007">
    <property type="gene designation" value="YGL039W"/>
</dbReference>
<dbReference type="VEuPathDB" id="FungiDB:YGL039W"/>
<dbReference type="eggNOG" id="KOG1502">
    <property type="taxonomic scope" value="Eukaryota"/>
</dbReference>
<dbReference type="GeneTree" id="ENSGT00940000176317"/>
<dbReference type="HOGENOM" id="CLU_007383_9_2_1"/>
<dbReference type="InParanoid" id="P53183"/>
<dbReference type="OMA" id="QGQMKEK"/>
<dbReference type="OrthoDB" id="2735536at2759"/>
<dbReference type="BioCyc" id="YEAST:G3O-30553-MONOMER"/>
<dbReference type="BioGRID-ORCS" id="852844">
    <property type="hits" value="0 hits in 10 CRISPR screens"/>
</dbReference>
<dbReference type="PRO" id="PR:P53183"/>
<dbReference type="Proteomes" id="UP000002311">
    <property type="component" value="Chromosome VII"/>
</dbReference>
<dbReference type="RNAct" id="P53183">
    <property type="molecule type" value="protein"/>
</dbReference>
<dbReference type="GO" id="GO:0005737">
    <property type="term" value="C:cytoplasm"/>
    <property type="evidence" value="ECO:0007005"/>
    <property type="project" value="SGD"/>
</dbReference>
<dbReference type="GO" id="GO:0004029">
    <property type="term" value="F:aldehyde dehydrogenase (NAD+) activity"/>
    <property type="evidence" value="ECO:0000314"/>
    <property type="project" value="SGD"/>
</dbReference>
<dbReference type="GO" id="GO:0004090">
    <property type="term" value="F:carbonyl reductase (NADPH) activity"/>
    <property type="evidence" value="ECO:0000314"/>
    <property type="project" value="SGD"/>
</dbReference>
<dbReference type="GO" id="GO:0016614">
    <property type="term" value="F:oxidoreductase activity, acting on CH-OH group of donors"/>
    <property type="evidence" value="ECO:0000314"/>
    <property type="project" value="SGD"/>
</dbReference>
<dbReference type="GO" id="GO:0016616">
    <property type="term" value="F:oxidoreductase activity, acting on the CH-OH group of donors, NAD or NADP as acceptor"/>
    <property type="evidence" value="ECO:0000318"/>
    <property type="project" value="GO_Central"/>
</dbReference>
<dbReference type="GO" id="GO:0042180">
    <property type="term" value="P:ketone metabolic process"/>
    <property type="evidence" value="ECO:0000314"/>
    <property type="project" value="SGD"/>
</dbReference>
<dbReference type="GO" id="GO:1901426">
    <property type="term" value="P:response to furfural"/>
    <property type="evidence" value="ECO:0000315"/>
    <property type="project" value="SGD"/>
</dbReference>
<dbReference type="CDD" id="cd05227">
    <property type="entry name" value="AR_SDR_e"/>
    <property type="match status" value="1"/>
</dbReference>
<dbReference type="FunFam" id="3.40.50.720:FF:000191">
    <property type="entry name" value="Methylglyoxal reductase (NADPH-dependent)"/>
    <property type="match status" value="1"/>
</dbReference>
<dbReference type="Gene3D" id="3.40.50.720">
    <property type="entry name" value="NAD(P)-binding Rossmann-like Domain"/>
    <property type="match status" value="1"/>
</dbReference>
<dbReference type="InterPro" id="IPR001509">
    <property type="entry name" value="Epimerase_deHydtase"/>
</dbReference>
<dbReference type="InterPro" id="IPR036291">
    <property type="entry name" value="NAD(P)-bd_dom_sf"/>
</dbReference>
<dbReference type="InterPro" id="IPR050425">
    <property type="entry name" value="NAD(P)_dehydrat-like"/>
</dbReference>
<dbReference type="PANTHER" id="PTHR10366">
    <property type="entry name" value="NAD DEPENDENT EPIMERASE/DEHYDRATASE"/>
    <property type="match status" value="1"/>
</dbReference>
<dbReference type="PANTHER" id="PTHR10366:SF564">
    <property type="entry name" value="STEROL-4-ALPHA-CARBOXYLATE 3-DEHYDROGENASE, DECARBOXYLATING"/>
    <property type="match status" value="1"/>
</dbReference>
<dbReference type="Pfam" id="PF01370">
    <property type="entry name" value="Epimerase"/>
    <property type="match status" value="1"/>
</dbReference>
<dbReference type="SUPFAM" id="SSF51735">
    <property type="entry name" value="NAD(P)-binding Rossmann-fold domains"/>
    <property type="match status" value="1"/>
</dbReference>
<protein>
    <recommendedName>
        <fullName>Putative uncharacterized oxidoreductase YGL039W</fullName>
        <ecNumber>1.1.1.-</ecNumber>
    </recommendedName>
</protein>
<proteinExistence type="evidence at protein level"/>
<sequence>MTTEKTVVFVSGATGFIALHVVDDLLKTGYKVIGSGRSQEKNDGLLKKFKSNPNLSMEIVEDIAAPNAFDKVFQKHGKEIKVVLHIASPVHFNTTDFEKDLLIPAVNGTKSILEAIKNYAADTVEKVVITSSVAALASPGDMKDTSFVVNEESWNKDTWESCQANAVSAYCGSKKFAEKTAWDFLEENQSSIKFTLSTINPGFVFGPQLFADSLRNGINSSSAIIANLVSYKLGDNFYNYSGPFIDVRDVSKAHLLAFEKPECAGQRLFLCEDMFCSQEALDILNEEFPQLKGKIATGEPGSGSTFLTKNCCKCDNRKTKNLLGFQFNKFRDCIVDTASQLLEVQSKS</sequence>
<reference key="1">
    <citation type="journal article" date="1997" name="Nature">
        <title>The nucleotide sequence of Saccharomyces cerevisiae chromosome VII.</title>
        <authorList>
            <person name="Tettelin H."/>
            <person name="Agostoni-Carbone M.L."/>
            <person name="Albermann K."/>
            <person name="Albers M."/>
            <person name="Arroyo J."/>
            <person name="Backes U."/>
            <person name="Barreiros T."/>
            <person name="Bertani I."/>
            <person name="Bjourson A.J."/>
            <person name="Brueckner M."/>
            <person name="Bruschi C.V."/>
            <person name="Carignani G."/>
            <person name="Castagnoli L."/>
            <person name="Cerdan E."/>
            <person name="Clemente M.L."/>
            <person name="Coblenz A."/>
            <person name="Coglievina M."/>
            <person name="Coissac E."/>
            <person name="Defoor E."/>
            <person name="Del Bino S."/>
            <person name="Delius H."/>
            <person name="Delneri D."/>
            <person name="de Wergifosse P."/>
            <person name="Dujon B."/>
            <person name="Durand P."/>
            <person name="Entian K.-D."/>
            <person name="Eraso P."/>
            <person name="Escribano V."/>
            <person name="Fabiani L."/>
            <person name="Fartmann B."/>
            <person name="Feroli F."/>
            <person name="Feuermann M."/>
            <person name="Frontali L."/>
            <person name="Garcia-Gonzalez M."/>
            <person name="Garcia-Saez M.I."/>
            <person name="Goffeau A."/>
            <person name="Guerreiro P."/>
            <person name="Hani J."/>
            <person name="Hansen M."/>
            <person name="Hebling U."/>
            <person name="Hernandez K."/>
            <person name="Heumann K."/>
            <person name="Hilger F."/>
            <person name="Hofmann B."/>
            <person name="Indge K.J."/>
            <person name="James C.M."/>
            <person name="Klima R."/>
            <person name="Koetter P."/>
            <person name="Kramer B."/>
            <person name="Kramer W."/>
            <person name="Lauquin G."/>
            <person name="Leuther H."/>
            <person name="Louis E.J."/>
            <person name="Maillier E."/>
            <person name="Marconi A."/>
            <person name="Martegani E."/>
            <person name="Mazon M.J."/>
            <person name="Mazzoni C."/>
            <person name="McReynolds A.D.K."/>
            <person name="Melchioretto P."/>
            <person name="Mewes H.-W."/>
            <person name="Minenkova O."/>
            <person name="Mueller-Auer S."/>
            <person name="Nawrocki A."/>
            <person name="Netter P."/>
            <person name="Neu R."/>
            <person name="Nombela C."/>
            <person name="Oliver S.G."/>
            <person name="Panzeri L."/>
            <person name="Paoluzi S."/>
            <person name="Plevani P."/>
            <person name="Portetelle D."/>
            <person name="Portillo F."/>
            <person name="Potier S."/>
            <person name="Purnelle B."/>
            <person name="Rieger M."/>
            <person name="Riles L."/>
            <person name="Rinaldi T."/>
            <person name="Robben J."/>
            <person name="Rodrigues-Pousada C."/>
            <person name="Rodriguez-Belmonte E."/>
            <person name="Rodriguez-Torres A.M."/>
            <person name="Rose M."/>
            <person name="Ruzzi M."/>
            <person name="Saliola M."/>
            <person name="Sanchez-Perez M."/>
            <person name="Schaefer B."/>
            <person name="Schaefer M."/>
            <person name="Scharfe M."/>
            <person name="Schmidheini T."/>
            <person name="Schreer A."/>
            <person name="Skala J."/>
            <person name="Souciet J.-L."/>
            <person name="Steensma H.Y."/>
            <person name="Talla E."/>
            <person name="Thierry A."/>
            <person name="Vandenbol M."/>
            <person name="van der Aart Q.J.M."/>
            <person name="Van Dyck L."/>
            <person name="Vanoni M."/>
            <person name="Verhasselt P."/>
            <person name="Voet M."/>
            <person name="Volckaert G."/>
            <person name="Wambutt R."/>
            <person name="Watson M.D."/>
            <person name="Weber N."/>
            <person name="Wedler E."/>
            <person name="Wedler H."/>
            <person name="Wipfli P."/>
            <person name="Wolf K."/>
            <person name="Wright L.F."/>
            <person name="Zaccaria P."/>
            <person name="Zimmermann M."/>
            <person name="Zollner A."/>
            <person name="Kleine K."/>
        </authorList>
    </citation>
    <scope>NUCLEOTIDE SEQUENCE [LARGE SCALE GENOMIC DNA]</scope>
    <source>
        <strain>ATCC 204508 / S288c</strain>
    </source>
</reference>
<reference key="2">
    <citation type="journal article" date="2014" name="G3 (Bethesda)">
        <title>The reference genome sequence of Saccharomyces cerevisiae: Then and now.</title>
        <authorList>
            <person name="Engel S.R."/>
            <person name="Dietrich F.S."/>
            <person name="Fisk D.G."/>
            <person name="Binkley G."/>
            <person name="Balakrishnan R."/>
            <person name="Costanzo M.C."/>
            <person name="Dwight S.S."/>
            <person name="Hitz B.C."/>
            <person name="Karra K."/>
            <person name="Nash R.S."/>
            <person name="Weng S."/>
            <person name="Wong E.D."/>
            <person name="Lloyd P."/>
            <person name="Skrzypek M.S."/>
            <person name="Miyasato S.R."/>
            <person name="Simison M."/>
            <person name="Cherry J.M."/>
        </authorList>
    </citation>
    <scope>GENOME REANNOTATION</scope>
    <source>
        <strain>ATCC 204508 / S288c</strain>
    </source>
</reference>
<reference key="3">
    <citation type="journal article" date="2007" name="Genome Res.">
        <title>Approaching a complete repository of sequence-verified protein-encoding clones for Saccharomyces cerevisiae.</title>
        <authorList>
            <person name="Hu Y."/>
            <person name="Rolfs A."/>
            <person name="Bhullar B."/>
            <person name="Murthy T.V.S."/>
            <person name="Zhu C."/>
            <person name="Berger M.F."/>
            <person name="Camargo A.A."/>
            <person name="Kelley F."/>
            <person name="McCarron S."/>
            <person name="Jepson D."/>
            <person name="Richardson A."/>
            <person name="Raphael J."/>
            <person name="Moreira D."/>
            <person name="Taycher E."/>
            <person name="Zuo D."/>
            <person name="Mohr S."/>
            <person name="Kane M.F."/>
            <person name="Williamson J."/>
            <person name="Simpson A.J.G."/>
            <person name="Bulyk M.L."/>
            <person name="Harlow E."/>
            <person name="Marsischky G."/>
            <person name="Kolodner R.D."/>
            <person name="LaBaer J."/>
        </authorList>
    </citation>
    <scope>NUCLEOTIDE SEQUENCE [GENOMIC DNA]</scope>
    <source>
        <strain>ATCC 204508 / S288c</strain>
    </source>
</reference>
<reference key="4">
    <citation type="journal article" date="2003" name="Nature">
        <title>Global analysis of protein expression in yeast.</title>
        <authorList>
            <person name="Ghaemmaghami S."/>
            <person name="Huh W.-K."/>
            <person name="Bower K."/>
            <person name="Howson R.W."/>
            <person name="Belle A."/>
            <person name="Dephoure N."/>
            <person name="O'Shea E.K."/>
            <person name="Weissman J.S."/>
        </authorList>
    </citation>
    <scope>LEVEL OF PROTEIN EXPRESSION [LARGE SCALE ANALYSIS]</scope>
</reference>
<keyword id="KW-0560">Oxidoreductase</keyword>
<keyword id="KW-0597">Phosphoprotein</keyword>
<keyword id="KW-1185">Reference proteome</keyword>